<evidence type="ECO:0000255" key="1">
    <source>
        <dbReference type="HAMAP-Rule" id="MF_00593"/>
    </source>
</evidence>
<comment type="function">
    <text evidence="1">Catalyzes the first step in the D-alanylation of lipoteichoic acid (LTA), the activation of D-alanine and its transfer onto the D-alanyl carrier protein (Dcp) DltC. In an ATP-dependent two-step reaction, forms a high energy D-alanyl-AMP intermediate, followed by transfer of the D-alanyl residue as a thiol ester to the phosphopantheinyl prosthetic group of the Dcp. D-alanylation of LTA plays an important role in modulating the properties of the cell wall in Gram-positive bacteria, influencing the net charge of the cell wall.</text>
</comment>
<comment type="catalytic activity">
    <reaction evidence="1">
        <text>holo-[D-alanyl-carrier protein] + D-alanine + ATP = D-alanyl-[D-alanyl-carrier protein] + AMP + diphosphate</text>
        <dbReference type="Rhea" id="RHEA:55132"/>
        <dbReference type="Rhea" id="RHEA-COMP:14102"/>
        <dbReference type="Rhea" id="RHEA-COMP:14103"/>
        <dbReference type="ChEBI" id="CHEBI:30616"/>
        <dbReference type="ChEBI" id="CHEBI:33019"/>
        <dbReference type="ChEBI" id="CHEBI:57416"/>
        <dbReference type="ChEBI" id="CHEBI:64479"/>
        <dbReference type="ChEBI" id="CHEBI:138620"/>
        <dbReference type="ChEBI" id="CHEBI:456215"/>
        <dbReference type="EC" id="6.2.1.54"/>
    </reaction>
</comment>
<comment type="pathway">
    <text evidence="1">Cell wall biogenesis; lipoteichoic acid biosynthesis.</text>
</comment>
<comment type="subcellular location">
    <subcellularLocation>
        <location evidence="1">Cytoplasm</location>
    </subcellularLocation>
</comment>
<comment type="similarity">
    <text evidence="1">Belongs to the ATP-dependent AMP-binding enzyme family. DltA subfamily.</text>
</comment>
<sequence length="503" mass="56435">MKLLEQIEKWAIETPDQTAFVWRDAKITYKQLKEDSDALAHWISSEYPDDRSPIMVYGHMQPEMIINFLGCVKAGHAYIPVDLSIPADRVQRIAENSGAKLLLSAAVTVTDLPVRIVSEDNLKDIFFTHKGNTPNPEHAVKGDENFYIIYTSGSTGNPKGVQITYNCLVSFTQWAVEDFNLQTGQVFLNQAPFSFDLSVMDIYPSLVTGGTLWAIDKDMIARPKDLFASLEQSDIQVWTSTPSFAEMCLMEASFSESMLPNMKTFLFCGEVLPNEVARKLIERFPKATIMNTYGPTEATVAVTGIHVTEEVLDQYKSLPVGYCKSDCRLLIMKEDGTIAPDGEKGEIVIVGPSVSVGYLGSPELTEKAFTMIDGERAYKTGDAGYVENGLLFYNGRLDFQIKLHGYRMELEEIEHHLRACSYVEGAVIVPIKKGEKYDYLLAVVVPGEHSFEKEFKLTSAIKKELNERLPNYMIPRKFMYQSSIPMTPNGKVDRKKLLSEVTA</sequence>
<feature type="chain" id="PRO_1000146968" description="D-alanine--D-alanyl carrier protein ligase">
    <location>
        <begin position="1"/>
        <end position="503"/>
    </location>
</feature>
<feature type="binding site" evidence="1">
    <location>
        <begin position="151"/>
        <end position="152"/>
    </location>
    <ligand>
        <name>ATP</name>
        <dbReference type="ChEBI" id="CHEBI:30616"/>
    </ligand>
</feature>
<feature type="binding site" evidence="1">
    <location>
        <position position="196"/>
    </location>
    <ligand>
        <name>D-alanine</name>
        <dbReference type="ChEBI" id="CHEBI:57416"/>
    </ligand>
</feature>
<feature type="binding site" evidence="1">
    <location>
        <begin position="291"/>
        <end position="296"/>
    </location>
    <ligand>
        <name>ATP</name>
        <dbReference type="ChEBI" id="CHEBI:30616"/>
    </ligand>
</feature>
<feature type="binding site" evidence="1">
    <location>
        <position position="300"/>
    </location>
    <ligand>
        <name>D-alanine</name>
        <dbReference type="ChEBI" id="CHEBI:57416"/>
    </ligand>
</feature>
<feature type="binding site" evidence="1">
    <location>
        <position position="382"/>
    </location>
    <ligand>
        <name>ATP</name>
        <dbReference type="ChEBI" id="CHEBI:30616"/>
    </ligand>
</feature>
<feature type="binding site" evidence="1">
    <location>
        <begin position="393"/>
        <end position="396"/>
    </location>
    <ligand>
        <name>ATP</name>
        <dbReference type="ChEBI" id="CHEBI:30616"/>
    </ligand>
</feature>
<feature type="binding site" evidence="1">
    <location>
        <position position="491"/>
    </location>
    <ligand>
        <name>ATP</name>
        <dbReference type="ChEBI" id="CHEBI:30616"/>
    </ligand>
</feature>
<feature type="binding site" evidence="1">
    <location>
        <position position="491"/>
    </location>
    <ligand>
        <name>D-alanine</name>
        <dbReference type="ChEBI" id="CHEBI:57416"/>
    </ligand>
</feature>
<proteinExistence type="inferred from homology"/>
<accession>C3P4I7</accession>
<gene>
    <name evidence="1" type="primary">dltA</name>
    <name type="ordered locus">BAA_1458</name>
</gene>
<dbReference type="EC" id="6.2.1.54" evidence="1"/>
<dbReference type="EMBL" id="CP001598">
    <property type="protein sequence ID" value="ACQ48046.1"/>
    <property type="molecule type" value="Genomic_DNA"/>
</dbReference>
<dbReference type="RefSeq" id="WP_000770521.1">
    <property type="nucleotide sequence ID" value="NC_012659.1"/>
</dbReference>
<dbReference type="SMR" id="C3P4I7"/>
<dbReference type="GeneID" id="45021373"/>
<dbReference type="KEGG" id="bai:BAA_1458"/>
<dbReference type="HOGENOM" id="CLU_000022_2_12_9"/>
<dbReference type="UniPathway" id="UPA00556"/>
<dbReference type="GO" id="GO:0005737">
    <property type="term" value="C:cytoplasm"/>
    <property type="evidence" value="ECO:0007669"/>
    <property type="project" value="UniProtKB-SubCell"/>
</dbReference>
<dbReference type="GO" id="GO:0005524">
    <property type="term" value="F:ATP binding"/>
    <property type="evidence" value="ECO:0007669"/>
    <property type="project" value="UniProtKB-KW"/>
</dbReference>
<dbReference type="GO" id="GO:0047473">
    <property type="term" value="F:D-alanine [D-alanyl carrier protein] ligase activity"/>
    <property type="evidence" value="ECO:0007669"/>
    <property type="project" value="UniProtKB-UniRule"/>
</dbReference>
<dbReference type="GO" id="GO:0070395">
    <property type="term" value="P:lipoteichoic acid biosynthetic process"/>
    <property type="evidence" value="ECO:0007669"/>
    <property type="project" value="UniProtKB-UniRule"/>
</dbReference>
<dbReference type="CDD" id="cd05945">
    <property type="entry name" value="DltA"/>
    <property type="match status" value="1"/>
</dbReference>
<dbReference type="FunFam" id="3.30.300.30:FF:000012">
    <property type="entry name" value="D-alanine--D-alanyl carrier protein ligase"/>
    <property type="match status" value="1"/>
</dbReference>
<dbReference type="FunFam" id="3.40.50.12780:FF:000015">
    <property type="entry name" value="D-alanine--D-alanyl carrier protein ligase"/>
    <property type="match status" value="1"/>
</dbReference>
<dbReference type="Gene3D" id="3.30.300.30">
    <property type="match status" value="1"/>
</dbReference>
<dbReference type="Gene3D" id="3.40.50.12780">
    <property type="entry name" value="N-terminal domain of ligase-like"/>
    <property type="match status" value="1"/>
</dbReference>
<dbReference type="HAMAP" id="MF_00593">
    <property type="entry name" value="DltA"/>
    <property type="match status" value="1"/>
</dbReference>
<dbReference type="InterPro" id="IPR010071">
    <property type="entry name" value="AA_adenyl_dom"/>
</dbReference>
<dbReference type="InterPro" id="IPR025110">
    <property type="entry name" value="AMP-bd_C"/>
</dbReference>
<dbReference type="InterPro" id="IPR045851">
    <property type="entry name" value="AMP-bd_C_sf"/>
</dbReference>
<dbReference type="InterPro" id="IPR020845">
    <property type="entry name" value="AMP-binding_CS"/>
</dbReference>
<dbReference type="InterPro" id="IPR000873">
    <property type="entry name" value="AMP-dep_synth/lig_dom"/>
</dbReference>
<dbReference type="InterPro" id="IPR042099">
    <property type="entry name" value="ANL_N_sf"/>
</dbReference>
<dbReference type="InterPro" id="IPR010072">
    <property type="entry name" value="DltA"/>
</dbReference>
<dbReference type="InterPro" id="IPR044507">
    <property type="entry name" value="DltA-like"/>
</dbReference>
<dbReference type="NCBIfam" id="TIGR01733">
    <property type="entry name" value="AA-adenyl-dom"/>
    <property type="match status" value="1"/>
</dbReference>
<dbReference type="NCBIfam" id="TIGR01734">
    <property type="entry name" value="D-ala-DACP-lig"/>
    <property type="match status" value="1"/>
</dbReference>
<dbReference type="NCBIfam" id="NF003417">
    <property type="entry name" value="PRK04813.1"/>
    <property type="match status" value="1"/>
</dbReference>
<dbReference type="PANTHER" id="PTHR45398">
    <property type="match status" value="1"/>
</dbReference>
<dbReference type="PANTHER" id="PTHR45398:SF1">
    <property type="entry name" value="ENZYME, PUTATIVE (JCVI)-RELATED"/>
    <property type="match status" value="1"/>
</dbReference>
<dbReference type="Pfam" id="PF00501">
    <property type="entry name" value="AMP-binding"/>
    <property type="match status" value="1"/>
</dbReference>
<dbReference type="Pfam" id="PF13193">
    <property type="entry name" value="AMP-binding_C"/>
    <property type="match status" value="1"/>
</dbReference>
<dbReference type="SUPFAM" id="SSF56801">
    <property type="entry name" value="Acetyl-CoA synthetase-like"/>
    <property type="match status" value="1"/>
</dbReference>
<dbReference type="PROSITE" id="PS00455">
    <property type="entry name" value="AMP_BINDING"/>
    <property type="match status" value="1"/>
</dbReference>
<protein>
    <recommendedName>
        <fullName evidence="1">D-alanine--D-alanyl carrier protein ligase</fullName>
        <shortName evidence="1">DCL</shortName>
        <ecNumber evidence="1">6.2.1.54</ecNumber>
    </recommendedName>
    <alternativeName>
        <fullName evidence="1">D-alanine--poly(phosphoribitol) ligase subunit 1</fullName>
    </alternativeName>
    <alternativeName>
        <fullName evidence="1">D-alanine-activating enzyme</fullName>
        <shortName evidence="1">DAE</shortName>
    </alternativeName>
</protein>
<reference key="1">
    <citation type="submission" date="2009-04" db="EMBL/GenBank/DDBJ databases">
        <title>Genome sequence of Bacillus anthracis A0248.</title>
        <authorList>
            <person name="Dodson R.J."/>
            <person name="Munk A.C."/>
            <person name="Bruce D."/>
            <person name="Detter C."/>
            <person name="Tapia R."/>
            <person name="Sutton G."/>
            <person name="Sims D."/>
            <person name="Brettin T."/>
        </authorList>
    </citation>
    <scope>NUCLEOTIDE SEQUENCE [LARGE SCALE GENOMIC DNA]</scope>
    <source>
        <strain>A0248</strain>
    </source>
</reference>
<keyword id="KW-0067">ATP-binding</keyword>
<keyword id="KW-0963">Cytoplasm</keyword>
<keyword id="KW-0436">Ligase</keyword>
<keyword id="KW-0547">Nucleotide-binding</keyword>
<name>DLTA_BACAA</name>
<organism>
    <name type="scientific">Bacillus anthracis (strain A0248)</name>
    <dbReference type="NCBI Taxonomy" id="592021"/>
    <lineage>
        <taxon>Bacteria</taxon>
        <taxon>Bacillati</taxon>
        <taxon>Bacillota</taxon>
        <taxon>Bacilli</taxon>
        <taxon>Bacillales</taxon>
        <taxon>Bacillaceae</taxon>
        <taxon>Bacillus</taxon>
        <taxon>Bacillus cereus group</taxon>
    </lineage>
</organism>